<protein>
    <recommendedName>
        <fullName evidence="1">3-hydroxydecanoyl-[acyl-carrier-protein] dehydratase</fullName>
        <ecNumber evidence="1">4.2.1.59</ecNumber>
    </recommendedName>
    <alternativeName>
        <fullName evidence="1">3-hydroxyacyl-[acyl-carrier-protein] dehydratase FabA</fullName>
    </alternativeName>
    <alternativeName>
        <fullName evidence="1">Beta-hydroxydecanoyl thioester dehydrase</fullName>
    </alternativeName>
    <alternativeName>
        <fullName evidence="1">Trans-2-decenoyl-[acyl-carrier-protein] isomerase</fullName>
        <ecNumber evidence="1">5.3.3.14</ecNumber>
    </alternativeName>
</protein>
<sequence length="170" mass="18759">MQKNAYTFEELLACGRGEMFGPGNAQLPAPPMLMFDRIVRIEAEGGKYGKGYVEAEFDIRPDLWFFDCHFIGDPVMPGCLGLDAMWQLVGFFLGWSGGPGRGRALGVGEVKFTGQVTPDIKKVVYKIDLKRVIMRKLVMGIADGVLEADGKVIYETSDLKVGLFTPEQMA</sequence>
<dbReference type="EC" id="4.2.1.59" evidence="1"/>
<dbReference type="EC" id="5.3.3.14" evidence="1"/>
<dbReference type="EMBL" id="CP001340">
    <property type="protein sequence ID" value="ACL97301.1"/>
    <property type="molecule type" value="Genomic_DNA"/>
</dbReference>
<dbReference type="RefSeq" id="WP_010921547.1">
    <property type="nucleotide sequence ID" value="NC_011916.1"/>
</dbReference>
<dbReference type="RefSeq" id="YP_002519209.1">
    <property type="nucleotide sequence ID" value="NC_011916.1"/>
</dbReference>
<dbReference type="SMR" id="B8GVZ8"/>
<dbReference type="GeneID" id="7332684"/>
<dbReference type="KEGG" id="ccs:CCNA_03836"/>
<dbReference type="PATRIC" id="fig|565050.3.peg.3741"/>
<dbReference type="HOGENOM" id="CLU_097925_0_0_5"/>
<dbReference type="OrthoDB" id="9786735at2"/>
<dbReference type="PhylomeDB" id="B8GVZ8"/>
<dbReference type="UniPathway" id="UPA00094"/>
<dbReference type="Proteomes" id="UP000001364">
    <property type="component" value="Chromosome"/>
</dbReference>
<dbReference type="GO" id="GO:0005737">
    <property type="term" value="C:cytoplasm"/>
    <property type="evidence" value="ECO:0007669"/>
    <property type="project" value="UniProtKB-SubCell"/>
</dbReference>
<dbReference type="GO" id="GO:0019171">
    <property type="term" value="F:(3R)-hydroxyacyl-[acyl-carrier-protein] dehydratase activity"/>
    <property type="evidence" value="ECO:0007669"/>
    <property type="project" value="UniProtKB-UniRule"/>
</dbReference>
<dbReference type="GO" id="GO:0034017">
    <property type="term" value="F:trans-2-decenoyl-acyl-carrier-protein isomerase activity"/>
    <property type="evidence" value="ECO:0007669"/>
    <property type="project" value="UniProtKB-UniRule"/>
</dbReference>
<dbReference type="GO" id="GO:0006636">
    <property type="term" value="P:unsaturated fatty acid biosynthetic process"/>
    <property type="evidence" value="ECO:0007669"/>
    <property type="project" value="UniProtKB-UniRule"/>
</dbReference>
<dbReference type="CDD" id="cd01287">
    <property type="entry name" value="FabA"/>
    <property type="match status" value="1"/>
</dbReference>
<dbReference type="Gene3D" id="3.10.129.10">
    <property type="entry name" value="Hotdog Thioesterase"/>
    <property type="match status" value="1"/>
</dbReference>
<dbReference type="HAMAP" id="MF_00405">
    <property type="entry name" value="FabA"/>
    <property type="match status" value="1"/>
</dbReference>
<dbReference type="InterPro" id="IPR010083">
    <property type="entry name" value="FabA"/>
</dbReference>
<dbReference type="InterPro" id="IPR013114">
    <property type="entry name" value="FabA_FabZ"/>
</dbReference>
<dbReference type="InterPro" id="IPR029069">
    <property type="entry name" value="HotDog_dom_sf"/>
</dbReference>
<dbReference type="NCBIfam" id="TIGR01749">
    <property type="entry name" value="fabA"/>
    <property type="match status" value="1"/>
</dbReference>
<dbReference type="NCBIfam" id="NF003509">
    <property type="entry name" value="PRK05174.1"/>
    <property type="match status" value="1"/>
</dbReference>
<dbReference type="PANTHER" id="PTHR30272">
    <property type="entry name" value="3-HYDROXYACYL-[ACYL-CARRIER-PROTEIN] DEHYDRATASE"/>
    <property type="match status" value="1"/>
</dbReference>
<dbReference type="PANTHER" id="PTHR30272:SF8">
    <property type="entry name" value="3-HYDROXYDECANOYL-[ACYL-CARRIER-PROTEIN] DEHYDRATASE"/>
    <property type="match status" value="1"/>
</dbReference>
<dbReference type="Pfam" id="PF07977">
    <property type="entry name" value="FabA"/>
    <property type="match status" value="1"/>
</dbReference>
<dbReference type="SUPFAM" id="SSF54637">
    <property type="entry name" value="Thioesterase/thiol ester dehydrase-isomerase"/>
    <property type="match status" value="1"/>
</dbReference>
<comment type="function">
    <text evidence="1">Necessary for the introduction of cis unsaturation into fatty acids. Catalyzes the dehydration of (3R)-3-hydroxydecanoyl-ACP to E-(2)-decenoyl-ACP and then its isomerization to Z-(3)-decenoyl-ACP. Can catalyze the dehydratase reaction for beta-hydroxyacyl-ACPs with saturated chain lengths up to 16:0, being most active on intermediate chain length.</text>
</comment>
<comment type="catalytic activity">
    <reaction evidence="1">
        <text>a (3R)-hydroxyacyl-[ACP] = a (2E)-enoyl-[ACP] + H2O</text>
        <dbReference type="Rhea" id="RHEA:13097"/>
        <dbReference type="Rhea" id="RHEA-COMP:9925"/>
        <dbReference type="Rhea" id="RHEA-COMP:9945"/>
        <dbReference type="ChEBI" id="CHEBI:15377"/>
        <dbReference type="ChEBI" id="CHEBI:78784"/>
        <dbReference type="ChEBI" id="CHEBI:78827"/>
        <dbReference type="EC" id="4.2.1.59"/>
    </reaction>
</comment>
<comment type="catalytic activity">
    <reaction evidence="1">
        <text>(3R)-hydroxydecanoyl-[ACP] = (2E)-decenoyl-[ACP] + H2O</text>
        <dbReference type="Rhea" id="RHEA:41860"/>
        <dbReference type="Rhea" id="RHEA-COMP:9638"/>
        <dbReference type="Rhea" id="RHEA-COMP:9639"/>
        <dbReference type="ChEBI" id="CHEBI:15377"/>
        <dbReference type="ChEBI" id="CHEBI:78466"/>
        <dbReference type="ChEBI" id="CHEBI:78467"/>
    </reaction>
</comment>
<comment type="catalytic activity">
    <reaction evidence="1">
        <text>(2E)-decenoyl-[ACP] = (3Z)-decenoyl-[ACP]</text>
        <dbReference type="Rhea" id="RHEA:23568"/>
        <dbReference type="Rhea" id="RHEA-COMP:9639"/>
        <dbReference type="Rhea" id="RHEA-COMP:9927"/>
        <dbReference type="ChEBI" id="CHEBI:78467"/>
        <dbReference type="ChEBI" id="CHEBI:78798"/>
        <dbReference type="EC" id="5.3.3.14"/>
    </reaction>
</comment>
<comment type="pathway">
    <text evidence="1">Lipid metabolism; fatty acid biosynthesis.</text>
</comment>
<comment type="subunit">
    <text evidence="1">Homodimer.</text>
</comment>
<comment type="subcellular location">
    <subcellularLocation>
        <location evidence="1">Cytoplasm</location>
    </subcellularLocation>
</comment>
<comment type="similarity">
    <text evidence="1">Belongs to the thioester dehydratase family. FabA subfamily.</text>
</comment>
<accession>B8GVZ8</accession>
<feature type="chain" id="PRO_1000201174" description="3-hydroxydecanoyl-[acyl-carrier-protein] dehydratase">
    <location>
        <begin position="1"/>
        <end position="170"/>
    </location>
</feature>
<feature type="active site" evidence="1">
    <location>
        <position position="69"/>
    </location>
</feature>
<organism>
    <name type="scientific">Caulobacter vibrioides (strain NA1000 / CB15N)</name>
    <name type="common">Caulobacter crescentus</name>
    <dbReference type="NCBI Taxonomy" id="565050"/>
    <lineage>
        <taxon>Bacteria</taxon>
        <taxon>Pseudomonadati</taxon>
        <taxon>Pseudomonadota</taxon>
        <taxon>Alphaproteobacteria</taxon>
        <taxon>Caulobacterales</taxon>
        <taxon>Caulobacteraceae</taxon>
        <taxon>Caulobacter</taxon>
    </lineage>
</organism>
<name>FABA_CAUVN</name>
<keyword id="KW-0963">Cytoplasm</keyword>
<keyword id="KW-0275">Fatty acid biosynthesis</keyword>
<keyword id="KW-0276">Fatty acid metabolism</keyword>
<keyword id="KW-0413">Isomerase</keyword>
<keyword id="KW-0444">Lipid biosynthesis</keyword>
<keyword id="KW-0443">Lipid metabolism</keyword>
<keyword id="KW-0456">Lyase</keyword>
<keyword id="KW-1185">Reference proteome</keyword>
<evidence type="ECO:0000255" key="1">
    <source>
        <dbReference type="HAMAP-Rule" id="MF_00405"/>
    </source>
</evidence>
<gene>
    <name evidence="1" type="primary">fabA</name>
    <name type="ordered locus">CCNA_03836</name>
</gene>
<proteinExistence type="inferred from homology"/>
<reference key="1">
    <citation type="journal article" date="2010" name="J. Bacteriol.">
        <title>The genetic basis of laboratory adaptation in Caulobacter crescentus.</title>
        <authorList>
            <person name="Marks M.E."/>
            <person name="Castro-Rojas C.M."/>
            <person name="Teiling C."/>
            <person name="Du L."/>
            <person name="Kapatral V."/>
            <person name="Walunas T.L."/>
            <person name="Crosson S."/>
        </authorList>
    </citation>
    <scope>NUCLEOTIDE SEQUENCE [LARGE SCALE GENOMIC DNA]</scope>
    <source>
        <strain>NA1000 / CB15N</strain>
    </source>
</reference>